<dbReference type="EMBL" id="AF093109">
    <property type="protein sequence ID" value="AAD23952.1"/>
    <property type="molecule type" value="mRNA"/>
</dbReference>
<dbReference type="SMR" id="Q9XEG7"/>
<dbReference type="GO" id="GO:0022627">
    <property type="term" value="C:cytosolic small ribosomal subunit"/>
    <property type="evidence" value="ECO:0007669"/>
    <property type="project" value="UniProtKB-UniRule"/>
</dbReference>
<dbReference type="GO" id="GO:0003735">
    <property type="term" value="F:structural constituent of ribosome"/>
    <property type="evidence" value="ECO:0007669"/>
    <property type="project" value="UniProtKB-UniRule"/>
</dbReference>
<dbReference type="GO" id="GO:0006412">
    <property type="term" value="P:translation"/>
    <property type="evidence" value="ECO:0007669"/>
    <property type="project" value="UniProtKB-UniRule"/>
</dbReference>
<dbReference type="HAMAP" id="MF_03122">
    <property type="entry name" value="Ribosomal_eS1_euk"/>
    <property type="match status" value="1"/>
</dbReference>
<dbReference type="InterPro" id="IPR001593">
    <property type="entry name" value="Ribosomal_eS1"/>
</dbReference>
<dbReference type="InterPro" id="IPR027500">
    <property type="entry name" value="Ribosomal_eS1_euk"/>
</dbReference>
<dbReference type="PANTHER" id="PTHR11830">
    <property type="entry name" value="40S RIBOSOMAL PROTEIN S3A"/>
    <property type="match status" value="1"/>
</dbReference>
<dbReference type="Pfam" id="PF01015">
    <property type="entry name" value="Ribosomal_S3Ae"/>
    <property type="match status" value="1"/>
</dbReference>
<dbReference type="SMART" id="SM01397">
    <property type="entry name" value="Ribosomal_S3Ae"/>
    <property type="match status" value="1"/>
</dbReference>
<evidence type="ECO:0000255" key="1">
    <source>
        <dbReference type="HAMAP-Rule" id="MF_03122"/>
    </source>
</evidence>
<evidence type="ECO:0000256" key="2">
    <source>
        <dbReference type="SAM" id="MobiDB-lite"/>
    </source>
</evidence>
<evidence type="ECO:0000305" key="3"/>
<protein>
    <recommendedName>
        <fullName evidence="1">Small ribosomal subunit protein eS1</fullName>
    </recommendedName>
    <alternativeName>
        <fullName evidence="3">40S ribosomal protein S3a</fullName>
    </alternativeName>
</protein>
<keyword id="KW-0963">Cytoplasm</keyword>
<keyword id="KW-0687">Ribonucleoprotein</keyword>
<keyword id="KW-0689">Ribosomal protein</keyword>
<organism>
    <name type="scientific">Syntrichia ruralis</name>
    <name type="common">Great hairy screw-moss</name>
    <name type="synonym">Tortula ruralis</name>
    <dbReference type="NCBI Taxonomy" id="38588"/>
    <lineage>
        <taxon>Eukaryota</taxon>
        <taxon>Viridiplantae</taxon>
        <taxon>Streptophyta</taxon>
        <taxon>Embryophyta</taxon>
        <taxon>Bryophyta</taxon>
        <taxon>Bryophytina</taxon>
        <taxon>Bryopsida</taxon>
        <taxon>Dicranidae</taxon>
        <taxon>Pottiales</taxon>
        <taxon>Pottiaceae</taxon>
        <taxon>Syntrichia</taxon>
    </lineage>
</organism>
<comment type="subunit">
    <text evidence="1">Component of the small ribosomal subunit. Mature ribosomes consist of a small (40S) and a large (60S) subunit. The 40S subunit contains about 33 different proteins and 1 molecule of RNA (18S). The 60S subunit contains about 49 different proteins and 3 molecules of RNA (25S, 5.8S and 5S).</text>
</comment>
<comment type="subcellular location">
    <subcellularLocation>
        <location evidence="1">Cytoplasm</location>
    </subcellularLocation>
</comment>
<comment type="similarity">
    <text evidence="1">Belongs to the eukaryotic ribosomal protein eS1 family.</text>
</comment>
<accession>Q9XEG7</accession>
<proteinExistence type="evidence at transcript level"/>
<feature type="initiator methionine" description="Removed" evidence="1">
    <location>
        <position position="1"/>
    </location>
</feature>
<feature type="chain" id="PRO_0000153537" description="Small ribosomal subunit protein eS1">
    <location>
        <begin position="2"/>
        <end position="248"/>
    </location>
</feature>
<feature type="region of interest" description="Disordered" evidence="2">
    <location>
        <begin position="1"/>
        <end position="21"/>
    </location>
</feature>
<sequence>MAVGKDKRISKGKKGGKKKIVDPFSKKDWYDIKAPPRSRRARSGRRCHRTAGTKIASDGLNFRVFEVSLADLQNDEDQAFRKIKLRAEDVQGKNVLTNFWGMDFTTDKLRSLVRKWQSLIQAHVDVKTTDNYQIRIFCIAFTKKRPNHTRNFYAQSSQIAIRRKMREIMVKEAQTCDLKELVAKFIPEVIGKEIDEWRSQGIYPLQSTFIRKVKILKAPKFDLMKLMEVHGDYNEEVGAKIREASSRG</sequence>
<name>RS3A_SYNRU</name>
<reference key="1">
    <citation type="submission" date="1998-09" db="EMBL/GenBank/DDBJ databases">
        <title>Characterization of a Tortula ruralis cDNA encoding ribosomal protein S3.</title>
        <authorList>
            <person name="Duff R.J."/>
            <person name="Oliver M.J."/>
            <person name="Wood A.J."/>
        </authorList>
    </citation>
    <scope>NUCLEOTIDE SEQUENCE [MRNA]</scope>
    <source>
        <tissue>Gametophyte</tissue>
    </source>
</reference>
<gene>
    <name evidence="1" type="primary">RPS3A</name>
    <name type="synonym">RPS3</name>
</gene>